<protein>
    <recommendedName>
        <fullName evidence="1">Serine hydroxymethyltransferase</fullName>
        <shortName evidence="1">SHMT</shortName>
        <shortName evidence="1">Serine methylase</shortName>
        <ecNumber evidence="1">2.1.2.1</ecNumber>
    </recommendedName>
</protein>
<name>GLYA_CLOPE</name>
<dbReference type="EC" id="2.1.2.1" evidence="1"/>
<dbReference type="EMBL" id="BA000016">
    <property type="protein sequence ID" value="BAB81635.1"/>
    <property type="molecule type" value="Genomic_DNA"/>
</dbReference>
<dbReference type="RefSeq" id="WP_011010689.1">
    <property type="nucleotide sequence ID" value="NC_003366.1"/>
</dbReference>
<dbReference type="SMR" id="Q8XJ32"/>
<dbReference type="STRING" id="195102.gene:10491198"/>
<dbReference type="KEGG" id="cpe:CPE1929"/>
<dbReference type="HOGENOM" id="CLU_022477_2_1_9"/>
<dbReference type="UniPathway" id="UPA00193"/>
<dbReference type="UniPathway" id="UPA00288">
    <property type="reaction ID" value="UER01023"/>
</dbReference>
<dbReference type="Proteomes" id="UP000000818">
    <property type="component" value="Chromosome"/>
</dbReference>
<dbReference type="GO" id="GO:0005829">
    <property type="term" value="C:cytosol"/>
    <property type="evidence" value="ECO:0007669"/>
    <property type="project" value="TreeGrafter"/>
</dbReference>
<dbReference type="GO" id="GO:0004372">
    <property type="term" value="F:glycine hydroxymethyltransferase activity"/>
    <property type="evidence" value="ECO:0007669"/>
    <property type="project" value="UniProtKB-UniRule"/>
</dbReference>
<dbReference type="GO" id="GO:0030170">
    <property type="term" value="F:pyridoxal phosphate binding"/>
    <property type="evidence" value="ECO:0007669"/>
    <property type="project" value="UniProtKB-UniRule"/>
</dbReference>
<dbReference type="GO" id="GO:0019264">
    <property type="term" value="P:glycine biosynthetic process from serine"/>
    <property type="evidence" value="ECO:0007669"/>
    <property type="project" value="UniProtKB-UniRule"/>
</dbReference>
<dbReference type="GO" id="GO:0035999">
    <property type="term" value="P:tetrahydrofolate interconversion"/>
    <property type="evidence" value="ECO:0007669"/>
    <property type="project" value="UniProtKB-UniRule"/>
</dbReference>
<dbReference type="CDD" id="cd00378">
    <property type="entry name" value="SHMT"/>
    <property type="match status" value="1"/>
</dbReference>
<dbReference type="FunFam" id="3.40.640.10:FF:000001">
    <property type="entry name" value="Serine hydroxymethyltransferase"/>
    <property type="match status" value="1"/>
</dbReference>
<dbReference type="FunFam" id="3.90.1150.10:FF:000003">
    <property type="entry name" value="Serine hydroxymethyltransferase"/>
    <property type="match status" value="1"/>
</dbReference>
<dbReference type="Gene3D" id="3.90.1150.10">
    <property type="entry name" value="Aspartate Aminotransferase, domain 1"/>
    <property type="match status" value="1"/>
</dbReference>
<dbReference type="Gene3D" id="3.40.640.10">
    <property type="entry name" value="Type I PLP-dependent aspartate aminotransferase-like (Major domain)"/>
    <property type="match status" value="1"/>
</dbReference>
<dbReference type="HAMAP" id="MF_00051">
    <property type="entry name" value="SHMT"/>
    <property type="match status" value="1"/>
</dbReference>
<dbReference type="InterPro" id="IPR015424">
    <property type="entry name" value="PyrdxlP-dep_Trfase"/>
</dbReference>
<dbReference type="InterPro" id="IPR015421">
    <property type="entry name" value="PyrdxlP-dep_Trfase_major"/>
</dbReference>
<dbReference type="InterPro" id="IPR015422">
    <property type="entry name" value="PyrdxlP-dep_Trfase_small"/>
</dbReference>
<dbReference type="InterPro" id="IPR001085">
    <property type="entry name" value="Ser_HO-MeTrfase"/>
</dbReference>
<dbReference type="InterPro" id="IPR049943">
    <property type="entry name" value="Ser_HO-MeTrfase-like"/>
</dbReference>
<dbReference type="InterPro" id="IPR019798">
    <property type="entry name" value="Ser_HO-MeTrfase_PLP_BS"/>
</dbReference>
<dbReference type="InterPro" id="IPR039429">
    <property type="entry name" value="SHMT-like_dom"/>
</dbReference>
<dbReference type="NCBIfam" id="NF000586">
    <property type="entry name" value="PRK00011.1"/>
    <property type="match status" value="1"/>
</dbReference>
<dbReference type="PANTHER" id="PTHR11680">
    <property type="entry name" value="SERINE HYDROXYMETHYLTRANSFERASE"/>
    <property type="match status" value="1"/>
</dbReference>
<dbReference type="PANTHER" id="PTHR11680:SF35">
    <property type="entry name" value="SERINE HYDROXYMETHYLTRANSFERASE 1"/>
    <property type="match status" value="1"/>
</dbReference>
<dbReference type="Pfam" id="PF00464">
    <property type="entry name" value="SHMT"/>
    <property type="match status" value="1"/>
</dbReference>
<dbReference type="PIRSF" id="PIRSF000412">
    <property type="entry name" value="SHMT"/>
    <property type="match status" value="1"/>
</dbReference>
<dbReference type="SUPFAM" id="SSF53383">
    <property type="entry name" value="PLP-dependent transferases"/>
    <property type="match status" value="1"/>
</dbReference>
<dbReference type="PROSITE" id="PS00096">
    <property type="entry name" value="SHMT"/>
    <property type="match status" value="1"/>
</dbReference>
<sequence length="410" mass="45189">MNFDNLEREDEQIAHLVQKEKERQENSIELIASENFVSKAVMEAMGSYLTNKYAEGYPSKRYYGGCHVVDEVEDLARERVKKLFGAEHANVQPHSGSQANMAVYFSILEPGDTVLGMDLSHGGHLTHGSSVNFSGRLFNFVSYGVDKETETINYETVRELALKHKPKLIVAGASAYSRIIDFKTLREIADEVGAYLMVDIAHIAGLVATGLHPSPVPYADFVTSTTHKTLRGPRGGLILCKEKFAKVLDKNIFPGIQGGPLMHIIAAKAVCFKEALEPSFKTYMEQVVKNAHVLAEALEAYGFKLVSNGTDNHLILVDLTNKDITGKDAEILLDSIGITLNKNTVPNETRSPFVTSGVRIGTPAITTRGFKEEEMKEIASIINDAIKEKDGDLEPLKARVKALCAKYPLY</sequence>
<reference key="1">
    <citation type="journal article" date="2002" name="Proc. Natl. Acad. Sci. U.S.A.">
        <title>Complete genome sequence of Clostridium perfringens, an anaerobic flesh-eater.</title>
        <authorList>
            <person name="Shimizu T."/>
            <person name="Ohtani K."/>
            <person name="Hirakawa H."/>
            <person name="Ohshima K."/>
            <person name="Yamashita A."/>
            <person name="Shiba T."/>
            <person name="Ogasawara N."/>
            <person name="Hattori M."/>
            <person name="Kuhara S."/>
            <person name="Hayashi H."/>
        </authorList>
    </citation>
    <scope>NUCLEOTIDE SEQUENCE [LARGE SCALE GENOMIC DNA]</scope>
    <source>
        <strain>13 / Type A</strain>
    </source>
</reference>
<keyword id="KW-0028">Amino-acid biosynthesis</keyword>
<keyword id="KW-0963">Cytoplasm</keyword>
<keyword id="KW-0554">One-carbon metabolism</keyword>
<keyword id="KW-0663">Pyridoxal phosphate</keyword>
<keyword id="KW-1185">Reference proteome</keyword>
<keyword id="KW-0808">Transferase</keyword>
<gene>
    <name evidence="1" type="primary">glyA</name>
    <name type="ordered locus">CPE1929</name>
</gene>
<accession>Q8XJ32</accession>
<proteinExistence type="inferred from homology"/>
<feature type="chain" id="PRO_0000113564" description="Serine hydroxymethyltransferase">
    <location>
        <begin position="1"/>
        <end position="410"/>
    </location>
</feature>
<feature type="binding site" evidence="1">
    <location>
        <position position="119"/>
    </location>
    <ligand>
        <name>(6S)-5,6,7,8-tetrahydrofolate</name>
        <dbReference type="ChEBI" id="CHEBI:57453"/>
    </ligand>
</feature>
<feature type="binding site" evidence="1">
    <location>
        <begin position="123"/>
        <end position="125"/>
    </location>
    <ligand>
        <name>(6S)-5,6,7,8-tetrahydrofolate</name>
        <dbReference type="ChEBI" id="CHEBI:57453"/>
    </ligand>
</feature>
<feature type="binding site" evidence="1">
    <location>
        <begin position="351"/>
        <end position="353"/>
    </location>
    <ligand>
        <name>(6S)-5,6,7,8-tetrahydrofolate</name>
        <dbReference type="ChEBI" id="CHEBI:57453"/>
    </ligand>
</feature>
<feature type="site" description="Plays an important role in substrate specificity" evidence="1">
    <location>
        <position position="227"/>
    </location>
</feature>
<feature type="modified residue" description="N6-(pyridoxal phosphate)lysine" evidence="1">
    <location>
        <position position="228"/>
    </location>
</feature>
<comment type="function">
    <text evidence="1">Catalyzes the reversible interconversion of serine and glycine with tetrahydrofolate (THF) serving as the one-carbon carrier. This reaction serves as the major source of one-carbon groups required for the biosynthesis of purines, thymidylate, methionine, and other important biomolecules. Also exhibits THF-independent aldolase activity toward beta-hydroxyamino acids, producing glycine and aldehydes, via a retro-aldol mechanism.</text>
</comment>
<comment type="catalytic activity">
    <reaction evidence="1">
        <text>(6R)-5,10-methylene-5,6,7,8-tetrahydrofolate + glycine + H2O = (6S)-5,6,7,8-tetrahydrofolate + L-serine</text>
        <dbReference type="Rhea" id="RHEA:15481"/>
        <dbReference type="ChEBI" id="CHEBI:15377"/>
        <dbReference type="ChEBI" id="CHEBI:15636"/>
        <dbReference type="ChEBI" id="CHEBI:33384"/>
        <dbReference type="ChEBI" id="CHEBI:57305"/>
        <dbReference type="ChEBI" id="CHEBI:57453"/>
        <dbReference type="EC" id="2.1.2.1"/>
    </reaction>
</comment>
<comment type="cofactor">
    <cofactor evidence="1">
        <name>pyridoxal 5'-phosphate</name>
        <dbReference type="ChEBI" id="CHEBI:597326"/>
    </cofactor>
</comment>
<comment type="pathway">
    <text evidence="1">One-carbon metabolism; tetrahydrofolate interconversion.</text>
</comment>
<comment type="pathway">
    <text evidence="1">Amino-acid biosynthesis; glycine biosynthesis; glycine from L-serine: step 1/1.</text>
</comment>
<comment type="subunit">
    <text evidence="1">Homodimer.</text>
</comment>
<comment type="subcellular location">
    <subcellularLocation>
        <location evidence="1">Cytoplasm</location>
    </subcellularLocation>
</comment>
<comment type="similarity">
    <text evidence="1">Belongs to the SHMT family.</text>
</comment>
<organism>
    <name type="scientific">Clostridium perfringens (strain 13 / Type A)</name>
    <dbReference type="NCBI Taxonomy" id="195102"/>
    <lineage>
        <taxon>Bacteria</taxon>
        <taxon>Bacillati</taxon>
        <taxon>Bacillota</taxon>
        <taxon>Clostridia</taxon>
        <taxon>Eubacteriales</taxon>
        <taxon>Clostridiaceae</taxon>
        <taxon>Clostridium</taxon>
    </lineage>
</organism>
<evidence type="ECO:0000255" key="1">
    <source>
        <dbReference type="HAMAP-Rule" id="MF_00051"/>
    </source>
</evidence>